<protein>
    <recommendedName>
        <fullName evidence="1">DNA-directed RNA polymerase subunit Rpo10</fullName>
        <ecNumber evidence="1">2.7.7.6</ecNumber>
    </recommendedName>
    <alternativeName>
        <fullName evidence="1">DNA-directed RNA polymerase subunit N</fullName>
    </alternativeName>
</protein>
<keyword id="KW-0963">Cytoplasm</keyword>
<keyword id="KW-0240">DNA-directed RNA polymerase</keyword>
<keyword id="KW-0479">Metal-binding</keyword>
<keyword id="KW-0548">Nucleotidyltransferase</keyword>
<keyword id="KW-1185">Reference proteome</keyword>
<keyword id="KW-0804">Transcription</keyword>
<keyword id="KW-0808">Transferase</keyword>
<keyword id="KW-0862">Zinc</keyword>
<dbReference type="EC" id="2.7.7.6" evidence="1"/>
<dbReference type="EMBL" id="CP001365">
    <property type="protein sequence ID" value="ACM57402.1"/>
    <property type="molecule type" value="Genomic_DNA"/>
</dbReference>
<dbReference type="RefSeq" id="WP_015910537.1">
    <property type="nucleotide sequence ID" value="NC_012029.1"/>
</dbReference>
<dbReference type="SMR" id="B9LPW4"/>
<dbReference type="GeneID" id="7400015"/>
<dbReference type="KEGG" id="hla:Hlac_1823"/>
<dbReference type="eggNOG" id="arCOG04244">
    <property type="taxonomic scope" value="Archaea"/>
</dbReference>
<dbReference type="HOGENOM" id="CLU_143122_1_1_2"/>
<dbReference type="Proteomes" id="UP000000740">
    <property type="component" value="Chromosome 1"/>
</dbReference>
<dbReference type="GO" id="GO:0005737">
    <property type="term" value="C:cytoplasm"/>
    <property type="evidence" value="ECO:0007669"/>
    <property type="project" value="UniProtKB-SubCell"/>
</dbReference>
<dbReference type="GO" id="GO:0000428">
    <property type="term" value="C:DNA-directed RNA polymerase complex"/>
    <property type="evidence" value="ECO:0007669"/>
    <property type="project" value="UniProtKB-KW"/>
</dbReference>
<dbReference type="GO" id="GO:0003677">
    <property type="term" value="F:DNA binding"/>
    <property type="evidence" value="ECO:0007669"/>
    <property type="project" value="InterPro"/>
</dbReference>
<dbReference type="GO" id="GO:0003899">
    <property type="term" value="F:DNA-directed RNA polymerase activity"/>
    <property type="evidence" value="ECO:0007669"/>
    <property type="project" value="UniProtKB-UniRule"/>
</dbReference>
<dbReference type="GO" id="GO:0008270">
    <property type="term" value="F:zinc ion binding"/>
    <property type="evidence" value="ECO:0007669"/>
    <property type="project" value="UniProtKB-UniRule"/>
</dbReference>
<dbReference type="GO" id="GO:0006351">
    <property type="term" value="P:DNA-templated transcription"/>
    <property type="evidence" value="ECO:0007669"/>
    <property type="project" value="UniProtKB-UniRule"/>
</dbReference>
<dbReference type="FunFam" id="1.10.10.60:FF:000335">
    <property type="entry name" value="DNA-directed RNA polymerase subunit N, putative"/>
    <property type="match status" value="1"/>
</dbReference>
<dbReference type="Gene3D" id="1.10.10.60">
    <property type="entry name" value="Homeodomain-like"/>
    <property type="match status" value="1"/>
</dbReference>
<dbReference type="HAMAP" id="MF_00250">
    <property type="entry name" value="RNApol_arch_Rpo10"/>
    <property type="match status" value="1"/>
</dbReference>
<dbReference type="InterPro" id="IPR023580">
    <property type="entry name" value="RNA_pol_su_RPB10"/>
</dbReference>
<dbReference type="InterPro" id="IPR020789">
    <property type="entry name" value="RNA_pol_suN_Zn-BS"/>
</dbReference>
<dbReference type="InterPro" id="IPR000268">
    <property type="entry name" value="RPABC5/Rpb10"/>
</dbReference>
<dbReference type="NCBIfam" id="NF003089">
    <property type="entry name" value="PRK04016.1"/>
    <property type="match status" value="1"/>
</dbReference>
<dbReference type="PANTHER" id="PTHR23431:SF3">
    <property type="entry name" value="DNA-DIRECTED RNA POLYMERASES I, II, AND III SUBUNIT RPABC5"/>
    <property type="match status" value="1"/>
</dbReference>
<dbReference type="PANTHER" id="PTHR23431">
    <property type="entry name" value="DNA-DIRECTED RNA POLYMERASES I, II, AND III SUBUNIT RPABC5 FAMILY MEMBER"/>
    <property type="match status" value="1"/>
</dbReference>
<dbReference type="Pfam" id="PF01194">
    <property type="entry name" value="RNA_pol_N"/>
    <property type="match status" value="1"/>
</dbReference>
<dbReference type="PIRSF" id="PIRSF005653">
    <property type="entry name" value="RNA_pol_N/8_sub"/>
    <property type="match status" value="1"/>
</dbReference>
<dbReference type="SUPFAM" id="SSF46924">
    <property type="entry name" value="RNA polymerase subunit RPB10"/>
    <property type="match status" value="1"/>
</dbReference>
<dbReference type="PROSITE" id="PS01112">
    <property type="entry name" value="RNA_POL_N_8KD"/>
    <property type="match status" value="1"/>
</dbReference>
<feature type="chain" id="PRO_1000194778" description="DNA-directed RNA polymerase subunit Rpo10">
    <location>
        <begin position="1"/>
        <end position="64"/>
    </location>
</feature>
<feature type="binding site" evidence="1">
    <location>
        <position position="7"/>
    </location>
    <ligand>
        <name>Zn(2+)</name>
        <dbReference type="ChEBI" id="CHEBI:29105"/>
    </ligand>
</feature>
<feature type="binding site" evidence="1">
    <location>
        <position position="10"/>
    </location>
    <ligand>
        <name>Zn(2+)</name>
        <dbReference type="ChEBI" id="CHEBI:29105"/>
    </ligand>
</feature>
<feature type="binding site" evidence="1">
    <location>
        <position position="45"/>
    </location>
    <ligand>
        <name>Zn(2+)</name>
        <dbReference type="ChEBI" id="CHEBI:29105"/>
    </ligand>
</feature>
<feature type="binding site" evidence="1">
    <location>
        <position position="46"/>
    </location>
    <ligand>
        <name>Zn(2+)</name>
        <dbReference type="ChEBI" id="CHEBI:29105"/>
    </ligand>
</feature>
<accession>B9LPW4</accession>
<evidence type="ECO:0000255" key="1">
    <source>
        <dbReference type="HAMAP-Rule" id="MF_00250"/>
    </source>
</evidence>
<organism>
    <name type="scientific">Halorubrum lacusprofundi (strain ATCC 49239 / DSM 5036 / JCM 8891 / ACAM 34)</name>
    <dbReference type="NCBI Taxonomy" id="416348"/>
    <lineage>
        <taxon>Archaea</taxon>
        <taxon>Methanobacteriati</taxon>
        <taxon>Methanobacteriota</taxon>
        <taxon>Stenosarchaea group</taxon>
        <taxon>Halobacteria</taxon>
        <taxon>Halobacteriales</taxon>
        <taxon>Haloferacaceae</taxon>
        <taxon>Halorubrum</taxon>
    </lineage>
</organism>
<gene>
    <name evidence="1" type="primary">rpo10</name>
    <name evidence="1" type="synonym">rpoN</name>
    <name type="ordered locus">Hlac_1823</name>
</gene>
<comment type="function">
    <text evidence="1">DNA-dependent RNA polymerase (RNAP) catalyzes the transcription of DNA into RNA using the four ribonucleoside triphosphates as substrates.</text>
</comment>
<comment type="catalytic activity">
    <reaction evidence="1">
        <text>RNA(n) + a ribonucleoside 5'-triphosphate = RNA(n+1) + diphosphate</text>
        <dbReference type="Rhea" id="RHEA:21248"/>
        <dbReference type="Rhea" id="RHEA-COMP:14527"/>
        <dbReference type="Rhea" id="RHEA-COMP:17342"/>
        <dbReference type="ChEBI" id="CHEBI:33019"/>
        <dbReference type="ChEBI" id="CHEBI:61557"/>
        <dbReference type="ChEBI" id="CHEBI:140395"/>
        <dbReference type="EC" id="2.7.7.6"/>
    </reaction>
</comment>
<comment type="cofactor">
    <cofactor evidence="1">
        <name>Zn(2+)</name>
        <dbReference type="ChEBI" id="CHEBI:29105"/>
    </cofactor>
    <text evidence="1">Binds 1 zinc ion.</text>
</comment>
<comment type="subunit">
    <text evidence="1">Part of the RNA polymerase complex.</text>
</comment>
<comment type="subcellular location">
    <subcellularLocation>
        <location evidence="1">Cytoplasm</location>
    </subcellularLocation>
</comment>
<comment type="similarity">
    <text evidence="1">Belongs to the archaeal Rpo10/eukaryotic RPB10 RNA polymerase subunit family.</text>
</comment>
<sequence length="64" mass="7465">MMIPVRCFTCGNVVGEHWEEFKERAREGDEDPGKVLDELGVDRHCCRRMMVSHRDLVDVVSPYQ</sequence>
<proteinExistence type="inferred from homology"/>
<name>RPO10_HALLT</name>
<reference key="1">
    <citation type="journal article" date="2016" name="Stand. Genomic Sci.">
        <title>Complete genome sequence of the Antarctic Halorubrum lacusprofundi type strain ACAM 34.</title>
        <authorList>
            <person name="Anderson I.J."/>
            <person name="DasSarma P."/>
            <person name="Lucas S."/>
            <person name="Copeland A."/>
            <person name="Lapidus A."/>
            <person name="Del Rio T.G."/>
            <person name="Tice H."/>
            <person name="Dalin E."/>
            <person name="Bruce D.C."/>
            <person name="Goodwin L."/>
            <person name="Pitluck S."/>
            <person name="Sims D."/>
            <person name="Brettin T.S."/>
            <person name="Detter J.C."/>
            <person name="Han C.S."/>
            <person name="Larimer F."/>
            <person name="Hauser L."/>
            <person name="Land M."/>
            <person name="Ivanova N."/>
            <person name="Richardson P."/>
            <person name="Cavicchioli R."/>
            <person name="DasSarma S."/>
            <person name="Woese C.R."/>
            <person name="Kyrpides N.C."/>
        </authorList>
    </citation>
    <scope>NUCLEOTIDE SEQUENCE [LARGE SCALE GENOMIC DNA]</scope>
    <source>
        <strain>ATCC 49239 / DSM 5036 / JCM 8891 / ACAM 34</strain>
    </source>
</reference>